<organism>
    <name type="scientific">Uncinocarpus reesii (strain UAMH 1704)</name>
    <dbReference type="NCBI Taxonomy" id="336963"/>
    <lineage>
        <taxon>Eukaryota</taxon>
        <taxon>Fungi</taxon>
        <taxon>Dikarya</taxon>
        <taxon>Ascomycota</taxon>
        <taxon>Pezizomycotina</taxon>
        <taxon>Eurotiomycetes</taxon>
        <taxon>Eurotiomycetidae</taxon>
        <taxon>Onygenales</taxon>
        <taxon>Onygenaceae</taxon>
        <taxon>Uncinocarpus</taxon>
    </lineage>
</organism>
<comment type="function">
    <text evidence="1">Required for the post-translational delivery of tail-anchored (TA) proteins to the endoplasmic reticulum. Acts as a membrane receptor for soluble GET3, which recognizes and selectively binds the transmembrane domain of TA proteins in the cytosol.</text>
</comment>
<comment type="subunit">
    <text evidence="1">Interacts with GET3.</text>
</comment>
<comment type="subcellular location">
    <subcellularLocation>
        <location evidence="1">Endoplasmic reticulum membrane</location>
        <topology evidence="1">Multi-pass membrane protein</topology>
    </subcellularLocation>
</comment>
<comment type="similarity">
    <text evidence="1">Belongs to the WRB/GET1 family.</text>
</comment>
<keyword id="KW-0175">Coiled coil</keyword>
<keyword id="KW-0256">Endoplasmic reticulum</keyword>
<keyword id="KW-0472">Membrane</keyword>
<keyword id="KW-1185">Reference proteome</keyword>
<keyword id="KW-0812">Transmembrane</keyword>
<keyword id="KW-1133">Transmembrane helix</keyword>
<keyword id="KW-0813">Transport</keyword>
<proteinExistence type="inferred from homology"/>
<name>GET1_UNCRE</name>
<accession>C4JT27</accession>
<dbReference type="EMBL" id="CH476617">
    <property type="protein sequence ID" value="EEP80774.1"/>
    <property type="molecule type" value="Genomic_DNA"/>
</dbReference>
<dbReference type="RefSeq" id="XP_002584927.1">
    <property type="nucleotide sequence ID" value="XM_002584881.1"/>
</dbReference>
<dbReference type="SMR" id="C4JT27"/>
<dbReference type="STRING" id="336963.C4JT27"/>
<dbReference type="GeneID" id="8441122"/>
<dbReference type="KEGG" id="ure:UREG_05616"/>
<dbReference type="VEuPathDB" id="FungiDB:UREG_05616"/>
<dbReference type="eggNOG" id="KOG4253">
    <property type="taxonomic scope" value="Eukaryota"/>
</dbReference>
<dbReference type="HOGENOM" id="CLU_089418_1_0_1"/>
<dbReference type="InParanoid" id="C4JT27"/>
<dbReference type="OMA" id="AEWIISF"/>
<dbReference type="OrthoDB" id="69461at2759"/>
<dbReference type="Proteomes" id="UP000002058">
    <property type="component" value="Unassembled WGS sequence"/>
</dbReference>
<dbReference type="GO" id="GO:0005789">
    <property type="term" value="C:endoplasmic reticulum membrane"/>
    <property type="evidence" value="ECO:0007669"/>
    <property type="project" value="UniProtKB-SubCell"/>
</dbReference>
<dbReference type="GO" id="GO:0043529">
    <property type="term" value="C:GET complex"/>
    <property type="evidence" value="ECO:0007669"/>
    <property type="project" value="InterPro"/>
</dbReference>
<dbReference type="GO" id="GO:0043495">
    <property type="term" value="F:protein-membrane adaptor activity"/>
    <property type="evidence" value="ECO:0007669"/>
    <property type="project" value="TreeGrafter"/>
</dbReference>
<dbReference type="GO" id="GO:0071816">
    <property type="term" value="P:tail-anchored membrane protein insertion into ER membrane"/>
    <property type="evidence" value="ECO:0007669"/>
    <property type="project" value="InterPro"/>
</dbReference>
<dbReference type="FunFam" id="1.10.287.660:FF:000006">
    <property type="entry name" value="Protein GET1"/>
    <property type="match status" value="1"/>
</dbReference>
<dbReference type="Gene3D" id="1.10.287.660">
    <property type="entry name" value="Helix hairpin bin"/>
    <property type="match status" value="1"/>
</dbReference>
<dbReference type="HAMAP" id="MF_03113">
    <property type="entry name" value="Get1"/>
    <property type="match status" value="1"/>
</dbReference>
<dbReference type="InterPro" id="IPR028945">
    <property type="entry name" value="Get1"/>
</dbReference>
<dbReference type="InterPro" id="IPR027538">
    <property type="entry name" value="Get1_fungi"/>
</dbReference>
<dbReference type="InterPro" id="IPR029012">
    <property type="entry name" value="Helix_hairpin_bin_sf"/>
</dbReference>
<dbReference type="PANTHER" id="PTHR42650:SF1">
    <property type="entry name" value="GUIDED ENTRY OF TAIL-ANCHORED PROTEINS FACTOR 1"/>
    <property type="match status" value="1"/>
</dbReference>
<dbReference type="PANTHER" id="PTHR42650">
    <property type="entry name" value="TAIL-ANCHORED PROTEIN INSERTION RECEPTOR WRB"/>
    <property type="match status" value="1"/>
</dbReference>
<dbReference type="Pfam" id="PF04420">
    <property type="entry name" value="CHD5"/>
    <property type="match status" value="1"/>
</dbReference>
<sequence length="210" mass="23877">MASLLIIVFLSHVVTYLINTIGATTVDNLLWLLYLKLPNNTSRTAVEQRRLKGEVVQLKREMKSTSSQDEFAKWAKLRRRHDKAMEEYEAKNKALGKHKGSFDLTVKSVRFFSTTGLKFFLQFWYSKTPMFELPRGWVPWQVEWVLSFPRAPLGTVSIQVWSGVCTTVVSLAGDALGVVIQSLILKMTKRGVARTSEGRPSQPMALKKEL</sequence>
<reference key="1">
    <citation type="journal article" date="2009" name="Genome Res.">
        <title>Comparative genomic analyses of the human fungal pathogens Coccidioides and their relatives.</title>
        <authorList>
            <person name="Sharpton T.J."/>
            <person name="Stajich J.E."/>
            <person name="Rounsley S.D."/>
            <person name="Gardner M.J."/>
            <person name="Wortman J.R."/>
            <person name="Jordar V.S."/>
            <person name="Maiti R."/>
            <person name="Kodira C.D."/>
            <person name="Neafsey D.E."/>
            <person name="Zeng Q."/>
            <person name="Hung C.-Y."/>
            <person name="McMahan C."/>
            <person name="Muszewska A."/>
            <person name="Grynberg M."/>
            <person name="Mandel M.A."/>
            <person name="Kellner E.M."/>
            <person name="Barker B.M."/>
            <person name="Galgiani J.N."/>
            <person name="Orbach M.J."/>
            <person name="Kirkland T.N."/>
            <person name="Cole G.T."/>
            <person name="Henn M.R."/>
            <person name="Birren B.W."/>
            <person name="Taylor J.W."/>
        </authorList>
    </citation>
    <scope>NUCLEOTIDE SEQUENCE [LARGE SCALE GENOMIC DNA]</scope>
    <source>
        <strain>UAMH 1704</strain>
    </source>
</reference>
<feature type="chain" id="PRO_0000388620" description="Protein GET1">
    <location>
        <begin position="1"/>
        <end position="210"/>
    </location>
</feature>
<feature type="topological domain" description="Lumenal" evidence="1">
    <location>
        <begin position="1"/>
        <end position="4"/>
    </location>
</feature>
<feature type="transmembrane region" description="Helical" evidence="1">
    <location>
        <begin position="5"/>
        <end position="24"/>
    </location>
</feature>
<feature type="topological domain" description="Cytoplasmic" evidence="1">
    <location>
        <begin position="25"/>
        <end position="110"/>
    </location>
</feature>
<feature type="transmembrane region" description="Helical" evidence="1">
    <location>
        <begin position="111"/>
        <end position="131"/>
    </location>
</feature>
<feature type="topological domain" description="Lumenal" evidence="1">
    <location>
        <begin position="132"/>
        <end position="155"/>
    </location>
</feature>
<feature type="transmembrane region" description="Helical" evidence="1">
    <location>
        <begin position="156"/>
        <end position="172"/>
    </location>
</feature>
<feature type="topological domain" description="Cytoplasmic" evidence="1">
    <location>
        <begin position="173"/>
        <end position="210"/>
    </location>
</feature>
<feature type="coiled-coil region" evidence="1">
    <location>
        <begin position="43"/>
        <end position="97"/>
    </location>
</feature>
<protein>
    <recommendedName>
        <fullName evidence="1">Protein GET1</fullName>
    </recommendedName>
    <alternativeName>
        <fullName evidence="1">Guided entry of tail-anchored proteins 1</fullName>
    </alternativeName>
</protein>
<gene>
    <name evidence="1" type="primary">GET1</name>
    <name type="ORF">UREG_05616</name>
</gene>
<evidence type="ECO:0000255" key="1">
    <source>
        <dbReference type="HAMAP-Rule" id="MF_03113"/>
    </source>
</evidence>